<protein>
    <recommendedName>
        <fullName>S-adenosylmethionine decarboxylase proenzyme</fullName>
        <shortName>AdoMetDC</shortName>
        <shortName>SAMDC</shortName>
        <ecNumber>4.1.1.50</ecNumber>
    </recommendedName>
    <component>
        <recommendedName>
            <fullName>S-adenosylmethionine decarboxylase alpha chain</fullName>
        </recommendedName>
    </component>
    <component>
        <recommendedName>
            <fullName>S-adenosylmethionine decarboxylase beta chain</fullName>
        </recommendedName>
    </component>
</protein>
<name>DCAM_SPIOL</name>
<accession>P46255</accession>
<gene>
    <name type="primary">SAMDC</name>
</gene>
<comment type="catalytic activity">
    <reaction>
        <text>S-adenosyl-L-methionine + H(+) = S-adenosyl 3-(methylsulfanyl)propylamine + CO2</text>
        <dbReference type="Rhea" id="RHEA:15981"/>
        <dbReference type="ChEBI" id="CHEBI:15378"/>
        <dbReference type="ChEBI" id="CHEBI:16526"/>
        <dbReference type="ChEBI" id="CHEBI:57443"/>
        <dbReference type="ChEBI" id="CHEBI:59789"/>
        <dbReference type="EC" id="4.1.1.50"/>
    </reaction>
</comment>
<comment type="cofactor">
    <cofactor evidence="1">
        <name>pyruvate</name>
        <dbReference type="ChEBI" id="CHEBI:15361"/>
    </cofactor>
    <text evidence="1">Binds 1 pyruvoyl group covalently per subunit.</text>
</comment>
<comment type="pathway">
    <text>Amine and polyamine biosynthesis; S-adenosylmethioninamine biosynthesis; S-adenosylmethioninamine from S-adenosyl-L-methionine: step 1/1.</text>
</comment>
<comment type="PTM">
    <text evidence="1">Is synthesized initially as an inactive proenzyme. Formation of the active enzyme involves a self-maturation process in which the active site pyruvoyl group is generated from an internal serine residue via an autocatalytic post-translational modification. Two non-identical subunits are generated from the proenzyme in this reaction, and the pyruvate is formed at the N-terminus of the alpha chain, which is derived from the carboxyl end of the proenzyme. The post-translation cleavage follows an unusual pathway, termed non-hydrolytic serinolysis, in which the side chain hydroxyl group of the serine supplies its oxygen atom to form the C-terminus of the beta chain, while the remainder of the serine residue undergoes an oxidative deamination to produce ammonia and the pyruvoyl group blocking the N-terminus of the alpha chain (By similarity).</text>
</comment>
<comment type="similarity">
    <text evidence="2">Belongs to the eukaryotic AdoMetDC family.</text>
</comment>
<feature type="chain" id="PRO_0000030025" description="S-adenosylmethionine decarboxylase beta chain" evidence="1">
    <location>
        <begin position="1"/>
        <end position="68"/>
    </location>
</feature>
<feature type="chain" id="PRO_0000030026" description="S-adenosylmethionine decarboxylase alpha chain" evidence="1">
    <location>
        <begin position="69"/>
        <end position="363"/>
    </location>
</feature>
<feature type="active site" evidence="1">
    <location>
        <position position="9"/>
    </location>
</feature>
<feature type="active site" evidence="1">
    <location>
        <position position="12"/>
    </location>
</feature>
<feature type="active site" description="Schiff-base intermediate with substrate; via pyruvic acid" evidence="1">
    <location>
        <position position="69"/>
    </location>
</feature>
<feature type="active site" description="Proton donor; for catalytic activity" evidence="1">
    <location>
        <position position="83"/>
    </location>
</feature>
<feature type="active site" description="Proton acceptor; for processing activity" evidence="1">
    <location>
        <position position="232"/>
    </location>
</feature>
<feature type="active site" description="Proton acceptor; for processing activity" evidence="1">
    <location>
        <position position="245"/>
    </location>
</feature>
<feature type="site" description="Cleavage (non-hydrolytic); by autolysis" evidence="1">
    <location>
        <begin position="68"/>
        <end position="69"/>
    </location>
</feature>
<feature type="modified residue" description="Pyruvic acid (Ser); by autocatalysis" evidence="1">
    <location>
        <position position="69"/>
    </location>
</feature>
<sequence>MAISAIGFEGFEKRLEITFFEPSIFVDPEGKGLRALCKAQLDEILGPAECTIVDSLANESVDSYVLSESSLFIYAYKIIIKTCGTTKLLRAIPPILRLAGKLSLDVKSVRYTRGSFIFPGAQSYAHRSFSEEVAVLDGYFGKLAAGSKAFVMGDPAKPQKWHVYSASAETISFEEPVYTLEMCMTGLKKEKASVFFKSQSPNAAVMTESSGIRKILPDSKICDFDFEPCGYSMNAIEGPAISTIHITPEDGFSYASFEAVGYDLKKTDLNQLVERVLACFEPSEFSIAIHAEIAANSMEHNCYVNVNGYSREEGGIEELGFGAASVFYQKFCKASTGFGATNKPKPALKCCWKEDKFEEEKDY</sequence>
<reference key="1">
    <citation type="journal article" date="1995" name="Plant Physiol.">
        <title>A spinach cDNA with homology to S-Adenosylmethionine decarboxylase.</title>
        <authorList>
            <person name="Bolle C."/>
            <person name="Herrmann R.G."/>
            <person name="Oelmueller R."/>
        </authorList>
    </citation>
    <scope>NUCLEOTIDE SEQUENCE [MRNA]</scope>
    <source>
        <strain>cv. Monatol</strain>
    </source>
</reference>
<dbReference type="EC" id="4.1.1.50"/>
<dbReference type="EMBL" id="X81414">
    <property type="protein sequence ID" value="CAA57170.1"/>
    <property type="molecule type" value="mRNA"/>
</dbReference>
<dbReference type="PIR" id="S49222">
    <property type="entry name" value="S49222"/>
</dbReference>
<dbReference type="SMR" id="P46255"/>
<dbReference type="UniPathway" id="UPA00331">
    <property type="reaction ID" value="UER00451"/>
</dbReference>
<dbReference type="Proteomes" id="UP001155700">
    <property type="component" value="Unplaced"/>
</dbReference>
<dbReference type="GO" id="GO:0005829">
    <property type="term" value="C:cytosol"/>
    <property type="evidence" value="ECO:0000318"/>
    <property type="project" value="GO_Central"/>
</dbReference>
<dbReference type="GO" id="GO:0004014">
    <property type="term" value="F:adenosylmethionine decarboxylase activity"/>
    <property type="evidence" value="ECO:0000318"/>
    <property type="project" value="GO_Central"/>
</dbReference>
<dbReference type="GO" id="GO:0008295">
    <property type="term" value="P:spermidine biosynthetic process"/>
    <property type="evidence" value="ECO:0000318"/>
    <property type="project" value="GO_Central"/>
</dbReference>
<dbReference type="GO" id="GO:0006597">
    <property type="term" value="P:spermine biosynthetic process"/>
    <property type="evidence" value="ECO:0000318"/>
    <property type="project" value="GO_Central"/>
</dbReference>
<dbReference type="FunFam" id="3.30.360.50:FF:000001">
    <property type="entry name" value="S-adenosylmethionine decarboxylase proenzyme"/>
    <property type="match status" value="1"/>
</dbReference>
<dbReference type="FunFam" id="3.60.90.10:FF:000002">
    <property type="entry name" value="S-adenosylmethionine decarboxylase proenzyme"/>
    <property type="match status" value="1"/>
</dbReference>
<dbReference type="Gene3D" id="3.30.360.50">
    <property type="entry name" value="S-adenosylmethionine decarboxylase"/>
    <property type="match status" value="1"/>
</dbReference>
<dbReference type="Gene3D" id="3.60.90.10">
    <property type="entry name" value="S-adenosylmethionine decarboxylase"/>
    <property type="match status" value="1"/>
</dbReference>
<dbReference type="InterPro" id="IPR048283">
    <property type="entry name" value="AdoMetDC-like"/>
</dbReference>
<dbReference type="InterPro" id="IPR001985">
    <property type="entry name" value="S-AdoMet_decarboxylase_euk"/>
</dbReference>
<dbReference type="InterPro" id="IPR016067">
    <property type="entry name" value="S-AdoMet_deCO2ase_core"/>
</dbReference>
<dbReference type="InterPro" id="IPR018166">
    <property type="entry name" value="S-AdoMet_deCO2ase_CS"/>
</dbReference>
<dbReference type="NCBIfam" id="TIGR00535">
    <property type="entry name" value="SAM_DCase"/>
    <property type="match status" value="1"/>
</dbReference>
<dbReference type="PANTHER" id="PTHR11570">
    <property type="entry name" value="S-ADENOSYLMETHIONINE DECARBOXYLASE"/>
    <property type="match status" value="1"/>
</dbReference>
<dbReference type="PANTHER" id="PTHR11570:SF15">
    <property type="entry name" value="S-ADENOSYLMETHIONINE DECARBOXYLASE PROENZYME 3"/>
    <property type="match status" value="1"/>
</dbReference>
<dbReference type="Pfam" id="PF01536">
    <property type="entry name" value="SAM_decarbox"/>
    <property type="match status" value="1"/>
</dbReference>
<dbReference type="PIRSF" id="PIRSF001355">
    <property type="entry name" value="S-AdenosylMet_decarboxylase"/>
    <property type="match status" value="1"/>
</dbReference>
<dbReference type="SUPFAM" id="SSF56276">
    <property type="entry name" value="S-adenosylmethionine decarboxylase"/>
    <property type="match status" value="1"/>
</dbReference>
<dbReference type="PROSITE" id="PS01336">
    <property type="entry name" value="ADOMETDC"/>
    <property type="match status" value="1"/>
</dbReference>
<proteinExistence type="evidence at transcript level"/>
<keyword id="KW-0068">Autocatalytic cleavage</keyword>
<keyword id="KW-0210">Decarboxylase</keyword>
<keyword id="KW-0456">Lyase</keyword>
<keyword id="KW-0620">Polyamine biosynthesis</keyword>
<keyword id="KW-0670">Pyruvate</keyword>
<keyword id="KW-1185">Reference proteome</keyword>
<keyword id="KW-0949">S-adenosyl-L-methionine</keyword>
<keyword id="KW-0704">Schiff base</keyword>
<keyword id="KW-0745">Spermidine biosynthesis</keyword>
<keyword id="KW-0865">Zymogen</keyword>
<evidence type="ECO:0000250" key="1"/>
<evidence type="ECO:0000305" key="2"/>
<organism>
    <name type="scientific">Spinacia oleracea</name>
    <name type="common">Spinach</name>
    <dbReference type="NCBI Taxonomy" id="3562"/>
    <lineage>
        <taxon>Eukaryota</taxon>
        <taxon>Viridiplantae</taxon>
        <taxon>Streptophyta</taxon>
        <taxon>Embryophyta</taxon>
        <taxon>Tracheophyta</taxon>
        <taxon>Spermatophyta</taxon>
        <taxon>Magnoliopsida</taxon>
        <taxon>eudicotyledons</taxon>
        <taxon>Gunneridae</taxon>
        <taxon>Pentapetalae</taxon>
        <taxon>Caryophyllales</taxon>
        <taxon>Chenopodiaceae</taxon>
        <taxon>Chenopodioideae</taxon>
        <taxon>Anserineae</taxon>
        <taxon>Spinacia</taxon>
    </lineage>
</organism>